<dbReference type="EMBL" id="AB001603">
    <property type="protein sequence ID" value="BAA19420.1"/>
    <property type="molecule type" value="mRNA"/>
</dbReference>
<dbReference type="RefSeq" id="NP_001098125.1">
    <property type="nucleotide sequence ID" value="NM_001104655.1"/>
</dbReference>
<dbReference type="SMR" id="P87366"/>
<dbReference type="FunCoup" id="P87366">
    <property type="interactions" value="26"/>
</dbReference>
<dbReference type="STRING" id="8090.ENSORLP00000037458"/>
<dbReference type="Ensembl" id="ENSORLT00000024944.2">
    <property type="protein sequence ID" value="ENSORLP00000024943.1"/>
    <property type="gene ID" value="ENSORLG00000020100.2"/>
</dbReference>
<dbReference type="GeneID" id="100049180"/>
<dbReference type="KEGG" id="ola:100049180"/>
<dbReference type="CTD" id="100049180"/>
<dbReference type="eggNOG" id="KOG3656">
    <property type="taxonomic scope" value="Eukaryota"/>
</dbReference>
<dbReference type="GeneTree" id="ENSGT01030000234549"/>
<dbReference type="HOGENOM" id="CLU_009579_3_0_1"/>
<dbReference type="InParanoid" id="P87366"/>
<dbReference type="OMA" id="CFPVFTI"/>
<dbReference type="OrthoDB" id="5962323at2759"/>
<dbReference type="TreeFam" id="TF324998"/>
<dbReference type="Proteomes" id="UP000001038">
    <property type="component" value="Chromosome 5"/>
</dbReference>
<dbReference type="Proteomes" id="UP000265180">
    <property type="component" value="Unplaced"/>
</dbReference>
<dbReference type="Proteomes" id="UP000265200">
    <property type="component" value="Unplaced"/>
</dbReference>
<dbReference type="Bgee" id="ENSORLG00000020100">
    <property type="expression patterns" value="Expressed in sexually immature organism and 4 other cell types or tissues"/>
</dbReference>
<dbReference type="GO" id="GO:0001750">
    <property type="term" value="C:photoreceptor outer segment"/>
    <property type="evidence" value="ECO:0000318"/>
    <property type="project" value="GO_Central"/>
</dbReference>
<dbReference type="GO" id="GO:0005886">
    <property type="term" value="C:plasma membrane"/>
    <property type="evidence" value="ECO:0000318"/>
    <property type="project" value="GO_Central"/>
</dbReference>
<dbReference type="GO" id="GO:0008020">
    <property type="term" value="F:G protein-coupled photoreceptor activity"/>
    <property type="evidence" value="ECO:0000318"/>
    <property type="project" value="GO_Central"/>
</dbReference>
<dbReference type="GO" id="GO:0071482">
    <property type="term" value="P:cellular response to light stimulus"/>
    <property type="evidence" value="ECO:0000318"/>
    <property type="project" value="GO_Central"/>
</dbReference>
<dbReference type="GO" id="GO:0007186">
    <property type="term" value="P:G protein-coupled receptor signaling pathway"/>
    <property type="evidence" value="ECO:0000318"/>
    <property type="project" value="GO_Central"/>
</dbReference>
<dbReference type="GO" id="GO:0007602">
    <property type="term" value="P:phototransduction"/>
    <property type="evidence" value="ECO:0000318"/>
    <property type="project" value="GO_Central"/>
</dbReference>
<dbReference type="GO" id="GO:0007601">
    <property type="term" value="P:visual perception"/>
    <property type="evidence" value="ECO:0007669"/>
    <property type="project" value="UniProtKB-KW"/>
</dbReference>
<dbReference type="FunFam" id="1.20.1070.10:FF:000018">
    <property type="entry name" value="Rhodopsin"/>
    <property type="match status" value="1"/>
</dbReference>
<dbReference type="Gene3D" id="1.20.1070.10">
    <property type="entry name" value="Rhodopsin 7-helix transmembrane proteins"/>
    <property type="match status" value="1"/>
</dbReference>
<dbReference type="InterPro" id="IPR050125">
    <property type="entry name" value="GPCR_opsins"/>
</dbReference>
<dbReference type="InterPro" id="IPR000276">
    <property type="entry name" value="GPCR_Rhodpsn"/>
</dbReference>
<dbReference type="InterPro" id="IPR017452">
    <property type="entry name" value="GPCR_Rhodpsn_7TM"/>
</dbReference>
<dbReference type="InterPro" id="IPR001760">
    <property type="entry name" value="Opsin"/>
</dbReference>
<dbReference type="InterPro" id="IPR027430">
    <property type="entry name" value="Retinal_BS"/>
</dbReference>
<dbReference type="InterPro" id="IPR000732">
    <property type="entry name" value="Rhodopsin"/>
</dbReference>
<dbReference type="InterPro" id="IPR019477">
    <property type="entry name" value="Rhodopsin_N"/>
</dbReference>
<dbReference type="PANTHER" id="PTHR24240">
    <property type="entry name" value="OPSIN"/>
    <property type="match status" value="1"/>
</dbReference>
<dbReference type="Pfam" id="PF00001">
    <property type="entry name" value="7tm_1"/>
    <property type="match status" value="1"/>
</dbReference>
<dbReference type="Pfam" id="PF10413">
    <property type="entry name" value="Rhodopsin_N"/>
    <property type="match status" value="1"/>
</dbReference>
<dbReference type="PRINTS" id="PR00237">
    <property type="entry name" value="GPCRRHODOPSN"/>
</dbReference>
<dbReference type="PRINTS" id="PR00238">
    <property type="entry name" value="OPSIN"/>
</dbReference>
<dbReference type="PRINTS" id="PR00579">
    <property type="entry name" value="RHODOPSIN"/>
</dbReference>
<dbReference type="SUPFAM" id="SSF81321">
    <property type="entry name" value="Family A G protein-coupled receptor-like"/>
    <property type="match status" value="1"/>
</dbReference>
<dbReference type="PROSITE" id="PS00237">
    <property type="entry name" value="G_PROTEIN_RECEP_F1_1"/>
    <property type="match status" value="1"/>
</dbReference>
<dbReference type="PROSITE" id="PS50262">
    <property type="entry name" value="G_PROTEIN_RECEP_F1_2"/>
    <property type="match status" value="1"/>
</dbReference>
<dbReference type="PROSITE" id="PS00238">
    <property type="entry name" value="OPSIN"/>
    <property type="match status" value="1"/>
</dbReference>
<comment type="function">
    <text>Visual pigments are the light-absorbing molecules that mediate vision. They consist of an apoprotein, opsin, covalently linked to cis-retinal.</text>
</comment>
<comment type="subcellular location">
    <subcellularLocation>
        <location>Membrane</location>
        <topology>Multi-pass membrane protein</topology>
    </subcellularLocation>
</comment>
<comment type="tissue specificity">
    <text>The color pigments are found in the cone photoreceptor cells.</text>
</comment>
<comment type="PTM">
    <text evidence="1">Phosphorylated on some or all of the serine and threonine residues present in the C-terminal region.</text>
</comment>
<comment type="similarity">
    <text evidence="3">Belongs to the G-protein coupled receptor 1 family. Opsin subfamily.</text>
</comment>
<protein>
    <recommendedName>
        <fullName>Green-sensitive opsin</fullName>
    </recommendedName>
    <alternativeName>
        <fullName>Green cone photoreceptor pigment</fullName>
    </alternativeName>
    <alternativeName>
        <fullName>KFH-G</fullName>
    </alternativeName>
</protein>
<accession>P87366</accession>
<organism>
    <name type="scientific">Oryzias latipes</name>
    <name type="common">Japanese rice fish</name>
    <name type="synonym">Japanese killifish</name>
    <dbReference type="NCBI Taxonomy" id="8090"/>
    <lineage>
        <taxon>Eukaryota</taxon>
        <taxon>Metazoa</taxon>
        <taxon>Chordata</taxon>
        <taxon>Craniata</taxon>
        <taxon>Vertebrata</taxon>
        <taxon>Euteleostomi</taxon>
        <taxon>Actinopterygii</taxon>
        <taxon>Neopterygii</taxon>
        <taxon>Teleostei</taxon>
        <taxon>Neoteleostei</taxon>
        <taxon>Acanthomorphata</taxon>
        <taxon>Ovalentaria</taxon>
        <taxon>Atherinomorphae</taxon>
        <taxon>Beloniformes</taxon>
        <taxon>Adrianichthyidae</taxon>
        <taxon>Oryziinae</taxon>
        <taxon>Oryzias</taxon>
    </lineage>
</organism>
<feature type="chain" id="PRO_0000197781" description="Green-sensitive opsin">
    <location>
        <begin position="1"/>
        <end position="345"/>
    </location>
</feature>
<feature type="topological domain" description="Extracellular" evidence="2">
    <location>
        <begin position="1"/>
        <end position="37"/>
    </location>
</feature>
<feature type="transmembrane region" description="Helical; Name=1" evidence="2">
    <location>
        <begin position="38"/>
        <end position="62"/>
    </location>
</feature>
<feature type="topological domain" description="Cytoplasmic" evidence="2">
    <location>
        <begin position="63"/>
        <end position="74"/>
    </location>
</feature>
<feature type="transmembrane region" description="Helical; Name=2" evidence="2">
    <location>
        <begin position="75"/>
        <end position="100"/>
    </location>
</feature>
<feature type="topological domain" description="Extracellular" evidence="2">
    <location>
        <begin position="101"/>
        <end position="114"/>
    </location>
</feature>
<feature type="transmembrane region" description="Helical; Name=3" evidence="2">
    <location>
        <begin position="115"/>
        <end position="134"/>
    </location>
</feature>
<feature type="topological domain" description="Cytoplasmic" evidence="2">
    <location>
        <begin position="135"/>
        <end position="153"/>
    </location>
</feature>
<feature type="transmembrane region" description="Helical; Name=4" evidence="2">
    <location>
        <begin position="154"/>
        <end position="177"/>
    </location>
</feature>
<feature type="topological domain" description="Extracellular" evidence="2">
    <location>
        <begin position="178"/>
        <end position="203"/>
    </location>
</feature>
<feature type="transmembrane region" description="Helical; Name=5" evidence="2">
    <location>
        <begin position="204"/>
        <end position="231"/>
    </location>
</feature>
<feature type="topological domain" description="Cytoplasmic" evidence="2">
    <location>
        <begin position="232"/>
        <end position="253"/>
    </location>
</feature>
<feature type="transmembrane region" description="Helical; Name=6" evidence="2">
    <location>
        <begin position="254"/>
        <end position="277"/>
    </location>
</feature>
<feature type="topological domain" description="Extracellular" evidence="2">
    <location>
        <begin position="278"/>
        <end position="285"/>
    </location>
</feature>
<feature type="transmembrane region" description="Helical; Name=7" evidence="2">
    <location>
        <begin position="286"/>
        <end position="310"/>
    </location>
</feature>
<feature type="topological domain" description="Cytoplasmic" evidence="2">
    <location>
        <begin position="311"/>
        <end position="345"/>
    </location>
</feature>
<feature type="modified residue" description="N6-(retinylidene)lysine" evidence="1">
    <location>
        <position position="297"/>
    </location>
</feature>
<feature type="glycosylation site" description="N-linked (GlcNAc...) asparagine" evidence="2">
    <location>
        <position position="3"/>
    </location>
</feature>
<feature type="glycosylation site" description="N-linked (GlcNAc...) asparagine" evidence="2">
    <location>
        <position position="16"/>
    </location>
</feature>
<feature type="glycosylation site" description="N-linked (GlcNAc...) asparagine" evidence="2">
    <location>
        <position position="201"/>
    </location>
</feature>
<feature type="disulfide bond" evidence="3">
    <location>
        <begin position="111"/>
        <end position="188"/>
    </location>
</feature>
<name>OPSG_ORYLA</name>
<proteinExistence type="evidence at transcript level"/>
<sequence length="345" mass="38117">MENGTEGKNFYIPMNNRTGLVRSPYEYPQYYLADPWQFKLLGIYMFFLILTGFPINALTLVVTAQNKKLRQPLNFILVNLAVAGLIMVCFGFTVCIYSCMVGYFSLGPLGCTIEGFMATLGGQVSLWSLVVLAIERYIVVCKPMGSFKFTATHSAAGCAFTWIMASSCAVPPLVGWSRYIPEGIQVSCGPDYYTLAPGFNNESFVMYMFSCHFCVPVFTIFFTYGSLVMTVKAAAAQQQDSASTQKAEKEVTRMCFLMVLGFLLAWVPYASYAAWIFFNRGAAFSAMSMAIPSFFSKSSALFNPIIYILLNKQFRNCMLATIGMGGMVEDETSVSTSKTEVSTAA</sequence>
<evidence type="ECO:0000250" key="1"/>
<evidence type="ECO:0000255" key="2"/>
<evidence type="ECO:0000255" key="3">
    <source>
        <dbReference type="PROSITE-ProRule" id="PRU00521"/>
    </source>
</evidence>
<keyword id="KW-0157">Chromophore</keyword>
<keyword id="KW-1015">Disulfide bond</keyword>
<keyword id="KW-0297">G-protein coupled receptor</keyword>
<keyword id="KW-0325">Glycoprotein</keyword>
<keyword id="KW-0472">Membrane</keyword>
<keyword id="KW-0597">Phosphoprotein</keyword>
<keyword id="KW-0600">Photoreceptor protein</keyword>
<keyword id="KW-0675">Receptor</keyword>
<keyword id="KW-1185">Reference proteome</keyword>
<keyword id="KW-0681">Retinal protein</keyword>
<keyword id="KW-0716">Sensory transduction</keyword>
<keyword id="KW-0807">Transducer</keyword>
<keyword id="KW-0812">Transmembrane</keyword>
<keyword id="KW-1133">Transmembrane helix</keyword>
<keyword id="KW-0844">Vision</keyword>
<reference key="1">
    <citation type="submission" date="1997-03" db="EMBL/GenBank/DDBJ databases">
        <authorList>
            <person name="Hisatomi O."/>
            <person name="Satoh T."/>
            <person name="Tokunaga F."/>
        </authorList>
    </citation>
    <scope>NUCLEOTIDE SEQUENCE [MRNA]</scope>
    <source>
        <tissue>Retina</tissue>
    </source>
</reference>